<keyword id="KW-0025">Alternative splicing</keyword>
<keyword id="KW-1003">Cell membrane</keyword>
<keyword id="KW-1015">Disulfide bond</keyword>
<keyword id="KW-0297">G-protein coupled receptor</keyword>
<keyword id="KW-0325">Glycoprotein</keyword>
<keyword id="KW-0472">Membrane</keyword>
<keyword id="KW-0597">Phosphoprotein</keyword>
<keyword id="KW-0675">Receptor</keyword>
<keyword id="KW-1185">Reference proteome</keyword>
<keyword id="KW-0807">Transducer</keyword>
<keyword id="KW-0812">Transmembrane</keyword>
<keyword id="KW-1133">Transmembrane helix</keyword>
<proteinExistence type="evidence at transcript level"/>
<dbReference type="EMBL" id="U68037">
    <property type="protein sequence ID" value="AAB07735.1"/>
    <property type="molecule type" value="mRNA"/>
</dbReference>
<dbReference type="EMBL" id="D88751">
    <property type="protein sequence ID" value="BAA13691.1"/>
    <property type="molecule type" value="mRNA"/>
</dbReference>
<dbReference type="EMBL" id="D88752">
    <property type="protein sequence ID" value="BAA13692.1"/>
    <property type="molecule type" value="mRNA"/>
</dbReference>
<dbReference type="RefSeq" id="NP_001265404.1">
    <molecule id="P70597-1"/>
    <property type="nucleotide sequence ID" value="NM_001278475.1"/>
</dbReference>
<dbReference type="SMR" id="P70597"/>
<dbReference type="BioGRID" id="247666">
    <property type="interactions" value="1"/>
</dbReference>
<dbReference type="FunCoup" id="P70597">
    <property type="interactions" value="260"/>
</dbReference>
<dbReference type="STRING" id="10116.ENSRNOP00000005470"/>
<dbReference type="BindingDB" id="P70597"/>
<dbReference type="ChEMBL" id="CHEMBL5068"/>
<dbReference type="DrugCentral" id="P70597"/>
<dbReference type="GuidetoPHARMACOLOGY" id="340"/>
<dbReference type="GlyCosmos" id="P70597">
    <property type="glycosylation" value="3 sites, No reported glycans"/>
</dbReference>
<dbReference type="GlyGen" id="P70597">
    <property type="glycosylation" value="3 sites"/>
</dbReference>
<dbReference type="PhosphoSitePlus" id="P70597"/>
<dbReference type="PaxDb" id="10116-ENSRNOP00000005470"/>
<dbReference type="Ensembl" id="ENSRNOT00000005470.5">
    <molecule id="P70597-1"/>
    <property type="protein sequence ID" value="ENSRNOP00000005470.1"/>
    <property type="gene ID" value="ENSRNOG00000004094.5"/>
</dbReference>
<dbReference type="GeneID" id="25637"/>
<dbReference type="KEGG" id="rno:25637"/>
<dbReference type="AGR" id="RGD:3434"/>
<dbReference type="CTD" id="5731"/>
<dbReference type="RGD" id="3434">
    <property type="gene designation" value="Ptger1"/>
</dbReference>
<dbReference type="eggNOG" id="KOG3656">
    <property type="taxonomic scope" value="Eukaryota"/>
</dbReference>
<dbReference type="GeneTree" id="ENSGT01030000234559"/>
<dbReference type="HOGENOM" id="CLU_045991_3_0_1"/>
<dbReference type="InParanoid" id="P70597"/>
<dbReference type="PhylomeDB" id="P70597"/>
<dbReference type="TreeFam" id="TF324982"/>
<dbReference type="Reactome" id="R-RNO-391908">
    <property type="pathway name" value="Prostanoid ligand receptors"/>
</dbReference>
<dbReference type="Reactome" id="R-RNO-416476">
    <property type="pathway name" value="G alpha (q) signalling events"/>
</dbReference>
<dbReference type="PRO" id="PR:P70597"/>
<dbReference type="Proteomes" id="UP000002494">
    <property type="component" value="Chromosome 19"/>
</dbReference>
<dbReference type="Bgee" id="ENSRNOG00000004094">
    <property type="expression patterns" value="Expressed in thymus and 18 other cell types or tissues"/>
</dbReference>
<dbReference type="GO" id="GO:0005886">
    <property type="term" value="C:plasma membrane"/>
    <property type="evidence" value="ECO:0000266"/>
    <property type="project" value="RGD"/>
</dbReference>
<dbReference type="GO" id="GO:0031748">
    <property type="term" value="F:D1 dopamine receptor binding"/>
    <property type="evidence" value="ECO:0000266"/>
    <property type="project" value="RGD"/>
</dbReference>
<dbReference type="GO" id="GO:0004957">
    <property type="term" value="F:prostaglandin E receptor activity"/>
    <property type="evidence" value="ECO:0000314"/>
    <property type="project" value="RGD"/>
</dbReference>
<dbReference type="GO" id="GO:0007191">
    <property type="term" value="P:adenylate cyclase-activating dopamine receptor signaling pathway"/>
    <property type="evidence" value="ECO:0000266"/>
    <property type="project" value="RGD"/>
</dbReference>
<dbReference type="GO" id="GO:0007189">
    <property type="term" value="P:adenylate cyclase-activating G protein-coupled receptor signaling pathway"/>
    <property type="evidence" value="ECO:0000318"/>
    <property type="project" value="GO_Central"/>
</dbReference>
<dbReference type="GO" id="GO:0006954">
    <property type="term" value="P:inflammatory response"/>
    <property type="evidence" value="ECO:0000318"/>
    <property type="project" value="GO_Central"/>
</dbReference>
<dbReference type="GO" id="GO:0007204">
    <property type="term" value="P:positive regulation of cytosolic calcium ion concentration"/>
    <property type="evidence" value="ECO:0000318"/>
    <property type="project" value="GO_Central"/>
</dbReference>
<dbReference type="GO" id="GO:0032496">
    <property type="term" value="P:response to lipopolysaccharide"/>
    <property type="evidence" value="ECO:0000266"/>
    <property type="project" value="RGD"/>
</dbReference>
<dbReference type="GO" id="GO:0034695">
    <property type="term" value="P:response to prostaglandin E"/>
    <property type="evidence" value="ECO:0000266"/>
    <property type="project" value="RGD"/>
</dbReference>
<dbReference type="FunFam" id="1.20.1070.10:FF:000253">
    <property type="entry name" value="prostaglandin E2 receptor EP1 subtype"/>
    <property type="match status" value="1"/>
</dbReference>
<dbReference type="Gene3D" id="1.20.1070.10">
    <property type="entry name" value="Rhodopsin 7-helix transmembrane proteins"/>
    <property type="match status" value="1"/>
</dbReference>
<dbReference type="InterPro" id="IPR000276">
    <property type="entry name" value="GPCR_Rhodpsn"/>
</dbReference>
<dbReference type="InterPro" id="IPR017452">
    <property type="entry name" value="GPCR_Rhodpsn_7TM"/>
</dbReference>
<dbReference type="InterPro" id="IPR008365">
    <property type="entry name" value="Prostanoid_rcpt"/>
</dbReference>
<dbReference type="InterPro" id="IPR001244">
    <property type="entry name" value="Prostglndn_DP_rcpt"/>
</dbReference>
<dbReference type="InterPro" id="IPR000708">
    <property type="entry name" value="Prostglndn_EP1_rcpt"/>
</dbReference>
<dbReference type="PANTHER" id="PTHR11866">
    <property type="entry name" value="G-PROTEIN COUPLED RECEPTOR FAMILY 1 MEMBER"/>
    <property type="match status" value="1"/>
</dbReference>
<dbReference type="PANTHER" id="PTHR11866:SF3">
    <property type="entry name" value="PROSTAGLANDIN E2 RECEPTOR EP1 SUBTYPE"/>
    <property type="match status" value="1"/>
</dbReference>
<dbReference type="Pfam" id="PF00001">
    <property type="entry name" value="7tm_1"/>
    <property type="match status" value="1"/>
</dbReference>
<dbReference type="PRINTS" id="PR00428">
    <property type="entry name" value="PROSTAGLNDNR"/>
</dbReference>
<dbReference type="PRINTS" id="PR01788">
    <property type="entry name" value="PROSTANOIDR"/>
</dbReference>
<dbReference type="PRINTS" id="PR00580">
    <property type="entry name" value="PRSTNOIDEP1R"/>
</dbReference>
<dbReference type="SUPFAM" id="SSF81321">
    <property type="entry name" value="Family A G protein-coupled receptor-like"/>
    <property type="match status" value="1"/>
</dbReference>
<dbReference type="PROSITE" id="PS00237">
    <property type="entry name" value="G_PROTEIN_RECEP_F1_1"/>
    <property type="match status" value="1"/>
</dbReference>
<dbReference type="PROSITE" id="PS50262">
    <property type="entry name" value="G_PROTEIN_RECEP_F1_2"/>
    <property type="match status" value="1"/>
</dbReference>
<accession>P70597</accession>
<accession>P97537</accession>
<organism>
    <name type="scientific">Rattus norvegicus</name>
    <name type="common">Rat</name>
    <dbReference type="NCBI Taxonomy" id="10116"/>
    <lineage>
        <taxon>Eukaryota</taxon>
        <taxon>Metazoa</taxon>
        <taxon>Chordata</taxon>
        <taxon>Craniata</taxon>
        <taxon>Vertebrata</taxon>
        <taxon>Euteleostomi</taxon>
        <taxon>Mammalia</taxon>
        <taxon>Eutheria</taxon>
        <taxon>Euarchontoglires</taxon>
        <taxon>Glires</taxon>
        <taxon>Rodentia</taxon>
        <taxon>Myomorpha</taxon>
        <taxon>Muroidea</taxon>
        <taxon>Muridae</taxon>
        <taxon>Murinae</taxon>
        <taxon>Rattus</taxon>
    </lineage>
</organism>
<evidence type="ECO:0000250" key="1"/>
<evidence type="ECO:0000255" key="2"/>
<evidence type="ECO:0000255" key="3">
    <source>
        <dbReference type="PROSITE-ProRule" id="PRU00521"/>
    </source>
</evidence>
<evidence type="ECO:0000305" key="4"/>
<comment type="function">
    <text evidence="1">Receptor for prostaglandin E2 (PGE2). The activity of this receptor is mediated by G(q) proteins which activate a phosphatidylinositol-calcium second messenger system. May play a role as an important modulator of renal function (By similarity). Implicated the smooth muscle contractile response to PGE2 in various tissues. Isoform 1 and isoform 2 have identical ligand binding properties, but isoform 2 lacks coupling to calcium mobilization and may therefore attenuate the action of PGE2 on tissues.</text>
</comment>
<comment type="subcellular location">
    <subcellularLocation>
        <location>Cell membrane</location>
        <topology>Multi-pass membrane protein</topology>
    </subcellularLocation>
</comment>
<comment type="alternative products">
    <event type="alternative splicing"/>
    <isoform>
        <id>P70597-1</id>
        <name>1</name>
        <sequence type="displayed"/>
    </isoform>
    <isoform>
        <id>P70597-2</id>
        <name>2</name>
        <sequence type="described" ref="VSP_001927 VSP_001928"/>
    </isoform>
</comment>
<comment type="tissue specificity">
    <text>Highly abundant in kidney and lung. Found in a lesser extent in spleen, colon, and thymus. Also expressed in uterine myometrium and endometrium.</text>
</comment>
<comment type="PTM">
    <text evidence="4">Phosphorylated.</text>
</comment>
<comment type="similarity">
    <text evidence="3">Belongs to the G-protein coupled receptor 1 family.</text>
</comment>
<feature type="chain" id="PRO_0000070052" description="Prostaglandin E2 receptor EP1 subtype">
    <location>
        <begin position="1"/>
        <end position="405"/>
    </location>
</feature>
<feature type="topological domain" description="Extracellular" evidence="2">
    <location>
        <begin position="1"/>
        <end position="39"/>
    </location>
</feature>
<feature type="transmembrane region" description="Helical; Name=1" evidence="2">
    <location>
        <begin position="40"/>
        <end position="62"/>
    </location>
</feature>
<feature type="topological domain" description="Cytoplasmic" evidence="2">
    <location>
        <begin position="63"/>
        <end position="80"/>
    </location>
</feature>
<feature type="transmembrane region" description="Helical; Name=2" evidence="2">
    <location>
        <begin position="81"/>
        <end position="99"/>
    </location>
</feature>
<feature type="topological domain" description="Extracellular" evidence="2">
    <location>
        <begin position="100"/>
        <end position="113"/>
    </location>
</feature>
<feature type="transmembrane region" description="Helical; Name=3" evidence="2">
    <location>
        <begin position="114"/>
        <end position="135"/>
    </location>
</feature>
<feature type="topological domain" description="Cytoplasmic" evidence="2">
    <location>
        <begin position="136"/>
        <end position="157"/>
    </location>
</feature>
<feature type="transmembrane region" description="Helical; Name=4" evidence="2">
    <location>
        <begin position="158"/>
        <end position="179"/>
    </location>
</feature>
<feature type="topological domain" description="Extracellular" evidence="2">
    <location>
        <begin position="180"/>
        <end position="202"/>
    </location>
</feature>
<feature type="transmembrane region" description="Helical; Name=5" evidence="2">
    <location>
        <begin position="203"/>
        <end position="228"/>
    </location>
</feature>
<feature type="topological domain" description="Cytoplasmic" evidence="2">
    <location>
        <begin position="229"/>
        <end position="301"/>
    </location>
</feature>
<feature type="transmembrane region" description="Helical; Name=6" evidence="2">
    <location>
        <begin position="302"/>
        <end position="323"/>
    </location>
</feature>
<feature type="topological domain" description="Extracellular" evidence="2">
    <location>
        <begin position="324"/>
        <end position="337"/>
    </location>
</feature>
<feature type="transmembrane region" description="Helical; Name=7" evidence="2">
    <location>
        <begin position="338"/>
        <end position="357"/>
    </location>
</feature>
<feature type="topological domain" description="Cytoplasmic" evidence="2">
    <location>
        <begin position="358"/>
        <end position="405"/>
    </location>
</feature>
<feature type="glycosylation site" description="N-linked (GlcNAc...) asparagine" evidence="2">
    <location>
        <position position="7"/>
    </location>
</feature>
<feature type="glycosylation site" description="N-linked (GlcNAc...) asparagine" evidence="2">
    <location>
        <position position="24"/>
    </location>
</feature>
<feature type="glycosylation site" description="N-linked (GlcNAc...) asparagine" evidence="2">
    <location>
        <position position="34"/>
    </location>
</feature>
<feature type="disulfide bond" evidence="3">
    <location>
        <begin position="112"/>
        <end position="190"/>
    </location>
</feature>
<feature type="splice variant" id="VSP_001927" description="In isoform 2." evidence="4">
    <original>LVVLAIGGWNSNSLQRPLFLAVRLASWNQILDPWVYILLRQAMLRQLL</original>
    <variation>RGAVAPQAKLFSAPSWPLPAKDPACRQKPAPLLSRTLTFFTLFGNLCK</variation>
    <location>
        <begin position="319"/>
        <end position="366"/>
    </location>
</feature>
<feature type="splice variant" id="VSP_001928" description="In isoform 2." evidence="4">
    <location>
        <begin position="367"/>
        <end position="405"/>
    </location>
</feature>
<gene>
    <name type="primary">Ptger1</name>
</gene>
<reference key="1">
    <citation type="journal article" date="1997" name="Eur. J. Pharmacol.">
        <title>Molecular cloning and characterization of the four rat prostaglandin E2 prostanoid receptor subtypes.</title>
        <authorList>
            <person name="Boie Y."/>
            <person name="Stocco R."/>
            <person name="Sawyer N."/>
            <person name="Slipetz D.M."/>
            <person name="Ungrin M.D."/>
            <person name="Neuschafer-Rube F."/>
            <person name="Puschel G.P."/>
            <person name="Metters K.M."/>
            <person name="Abramovitz M."/>
        </authorList>
    </citation>
    <scope>NUCLEOTIDE SEQUENCE [MRNA]</scope>
    <source>
        <strain>Sprague-Dawley</strain>
    </source>
</reference>
<reference key="2">
    <citation type="journal article" date="1996" name="J. Biol. Chem.">
        <title>Suppression of prostaglandin E receptor signaling by the variant form of EP1 subtype.</title>
        <authorList>
            <person name="Okuda-Ashitaka E."/>
            <person name="Sakamoto K."/>
            <person name="Ezashi T."/>
            <person name="Miwa K."/>
            <person name="Ito S."/>
            <person name="Hayaishi O."/>
        </authorList>
    </citation>
    <scope>NUCLEOTIDE SEQUENCE [MRNA]</scope>
    <scope>ALTERNATIVE SPLICING</scope>
    <source>
        <strain>Wistar</strain>
        <tissue>Uterus</tissue>
    </source>
</reference>
<name>PE2R1_RAT</name>
<protein>
    <recommendedName>
        <fullName>Prostaglandin E2 receptor EP1 subtype</fullName>
        <shortName>PGE receptor EP1 subtype</shortName>
        <shortName>PGE2 receptor EP1 subtype</shortName>
    </recommendedName>
    <alternativeName>
        <fullName>Prostanoid EP1 receptor</fullName>
    </alternativeName>
</protein>
<sequence length="405" mass="43048">MSPYGLNLSLVDEATTCVTPRVPNTSVVLPTGGNGTSPALPIFSMTLGAVSNVLALALLAQVAGRLRRRRSTATFLLFVASLLAIDLAGHVIPGALVLRLYTAGRAPAGGACHFLGGCMVFFGLCPLLLGCGMAVERCVGVTQPLIHAARVSVARARLALALLAAMALAVALLPLVHVGHYELQYPGTWCFISLGPPGGWRQALLAGLFAGLGLAALLAALVCNTLSGLALLRARWRRRRSRRFRENAGPDDRRRWGSRGLRLASASSASSITSTTAALRSSRGGGSARRVHAHDVEMVGQLVGIMVVSCICWSPLLVLVVLAIGGWNSNSLQRPLFLAVRLASWNQILDPWVYILLRQAMLRQLLRLLPLRVSAKGGPTELSLTKSAWEASSLRSSRHSGFSHL</sequence>